<feature type="chain" id="PRO_0000225015" description="ELMO domain-containing protein 1">
    <location>
        <begin position="1"/>
        <end position="326"/>
    </location>
</feature>
<feature type="domain" description="ELMO" evidence="2">
    <location>
        <begin position="133"/>
        <end position="306"/>
    </location>
</feature>
<gene>
    <name type="primary">Elmod1</name>
</gene>
<comment type="function">
    <text evidence="1">Acts as a GTPase-activating protein (GAP) toward guanine nucleotide exchange factors like ARL2, ARL3, ARF1 and ARF6, but not for GTPases outside the Arf family.</text>
</comment>
<comment type="sequence caution" evidence="3">
    <conflict type="erroneous initiation">
        <sequence resource="EMBL-CDS" id="BAE21051"/>
    </conflict>
    <text>Extended N-terminus.</text>
</comment>
<sequence>MKHFLRMLIQVCLYFYCKFLWRCMKFVMRKLTGRCELQRICYGTKPGASRTMKIETSLRDSKSKLLQTSVSVHPDAIEKTIDDIMELKKINPDINPQLGISLQACLLQIVGYRNLIADVEKLRREPYDSDNPQHEEMLLKLWELLKPNTPLESRVSKQWCEIGFQGDDPKTDFRGMGLLGLYNLQYFAERDATVAQQVLSDSVHPKCSKFSKIEWEKKKMDKAIGYSFAIVGINITDLAYNLLVSGALKTHFYNIAPEAPTLSHFQQTFCYLMHEFHKFWIEEDPMDIMEFNRVREKFRKRIIKQLQNPDMALCPHFAASEGLINM</sequence>
<reference key="1">
    <citation type="journal article" date="2005" name="Science">
        <title>The transcriptional landscape of the mammalian genome.</title>
        <authorList>
            <person name="Carninci P."/>
            <person name="Kasukawa T."/>
            <person name="Katayama S."/>
            <person name="Gough J."/>
            <person name="Frith M.C."/>
            <person name="Maeda N."/>
            <person name="Oyama R."/>
            <person name="Ravasi T."/>
            <person name="Lenhard B."/>
            <person name="Wells C."/>
            <person name="Kodzius R."/>
            <person name="Shimokawa K."/>
            <person name="Bajic V.B."/>
            <person name="Brenner S.E."/>
            <person name="Batalov S."/>
            <person name="Forrest A.R."/>
            <person name="Zavolan M."/>
            <person name="Davis M.J."/>
            <person name="Wilming L.G."/>
            <person name="Aidinis V."/>
            <person name="Allen J.E."/>
            <person name="Ambesi-Impiombato A."/>
            <person name="Apweiler R."/>
            <person name="Aturaliya R.N."/>
            <person name="Bailey T.L."/>
            <person name="Bansal M."/>
            <person name="Baxter L."/>
            <person name="Beisel K.W."/>
            <person name="Bersano T."/>
            <person name="Bono H."/>
            <person name="Chalk A.M."/>
            <person name="Chiu K.P."/>
            <person name="Choudhary V."/>
            <person name="Christoffels A."/>
            <person name="Clutterbuck D.R."/>
            <person name="Crowe M.L."/>
            <person name="Dalla E."/>
            <person name="Dalrymple B.P."/>
            <person name="de Bono B."/>
            <person name="Della Gatta G."/>
            <person name="di Bernardo D."/>
            <person name="Down T."/>
            <person name="Engstrom P."/>
            <person name="Fagiolini M."/>
            <person name="Faulkner G."/>
            <person name="Fletcher C.F."/>
            <person name="Fukushima T."/>
            <person name="Furuno M."/>
            <person name="Futaki S."/>
            <person name="Gariboldi M."/>
            <person name="Georgii-Hemming P."/>
            <person name="Gingeras T.R."/>
            <person name="Gojobori T."/>
            <person name="Green R.E."/>
            <person name="Gustincich S."/>
            <person name="Harbers M."/>
            <person name="Hayashi Y."/>
            <person name="Hensch T.K."/>
            <person name="Hirokawa N."/>
            <person name="Hill D."/>
            <person name="Huminiecki L."/>
            <person name="Iacono M."/>
            <person name="Ikeo K."/>
            <person name="Iwama A."/>
            <person name="Ishikawa T."/>
            <person name="Jakt M."/>
            <person name="Kanapin A."/>
            <person name="Katoh M."/>
            <person name="Kawasawa Y."/>
            <person name="Kelso J."/>
            <person name="Kitamura H."/>
            <person name="Kitano H."/>
            <person name="Kollias G."/>
            <person name="Krishnan S.P."/>
            <person name="Kruger A."/>
            <person name="Kummerfeld S.K."/>
            <person name="Kurochkin I.V."/>
            <person name="Lareau L.F."/>
            <person name="Lazarevic D."/>
            <person name="Lipovich L."/>
            <person name="Liu J."/>
            <person name="Liuni S."/>
            <person name="McWilliam S."/>
            <person name="Madan Babu M."/>
            <person name="Madera M."/>
            <person name="Marchionni L."/>
            <person name="Matsuda H."/>
            <person name="Matsuzawa S."/>
            <person name="Miki H."/>
            <person name="Mignone F."/>
            <person name="Miyake S."/>
            <person name="Morris K."/>
            <person name="Mottagui-Tabar S."/>
            <person name="Mulder N."/>
            <person name="Nakano N."/>
            <person name="Nakauchi H."/>
            <person name="Ng P."/>
            <person name="Nilsson R."/>
            <person name="Nishiguchi S."/>
            <person name="Nishikawa S."/>
            <person name="Nori F."/>
            <person name="Ohara O."/>
            <person name="Okazaki Y."/>
            <person name="Orlando V."/>
            <person name="Pang K.C."/>
            <person name="Pavan W.J."/>
            <person name="Pavesi G."/>
            <person name="Pesole G."/>
            <person name="Petrovsky N."/>
            <person name="Piazza S."/>
            <person name="Reed J."/>
            <person name="Reid J.F."/>
            <person name="Ring B.Z."/>
            <person name="Ringwald M."/>
            <person name="Rost B."/>
            <person name="Ruan Y."/>
            <person name="Salzberg S.L."/>
            <person name="Sandelin A."/>
            <person name="Schneider C."/>
            <person name="Schoenbach C."/>
            <person name="Sekiguchi K."/>
            <person name="Semple C.A."/>
            <person name="Seno S."/>
            <person name="Sessa L."/>
            <person name="Sheng Y."/>
            <person name="Shibata Y."/>
            <person name="Shimada H."/>
            <person name="Shimada K."/>
            <person name="Silva D."/>
            <person name="Sinclair B."/>
            <person name="Sperling S."/>
            <person name="Stupka E."/>
            <person name="Sugiura K."/>
            <person name="Sultana R."/>
            <person name="Takenaka Y."/>
            <person name="Taki K."/>
            <person name="Tammoja K."/>
            <person name="Tan S.L."/>
            <person name="Tang S."/>
            <person name="Taylor M.S."/>
            <person name="Tegner J."/>
            <person name="Teichmann S.A."/>
            <person name="Ueda H.R."/>
            <person name="van Nimwegen E."/>
            <person name="Verardo R."/>
            <person name="Wei C.L."/>
            <person name="Yagi K."/>
            <person name="Yamanishi H."/>
            <person name="Zabarovsky E."/>
            <person name="Zhu S."/>
            <person name="Zimmer A."/>
            <person name="Hide W."/>
            <person name="Bult C."/>
            <person name="Grimmond S.M."/>
            <person name="Teasdale R.D."/>
            <person name="Liu E.T."/>
            <person name="Brusic V."/>
            <person name="Quackenbush J."/>
            <person name="Wahlestedt C."/>
            <person name="Mattick J.S."/>
            <person name="Hume D.A."/>
            <person name="Kai C."/>
            <person name="Sasaki D."/>
            <person name="Tomaru Y."/>
            <person name="Fukuda S."/>
            <person name="Kanamori-Katayama M."/>
            <person name="Suzuki M."/>
            <person name="Aoki J."/>
            <person name="Arakawa T."/>
            <person name="Iida J."/>
            <person name="Imamura K."/>
            <person name="Itoh M."/>
            <person name="Kato T."/>
            <person name="Kawaji H."/>
            <person name="Kawagashira N."/>
            <person name="Kawashima T."/>
            <person name="Kojima M."/>
            <person name="Kondo S."/>
            <person name="Konno H."/>
            <person name="Nakano K."/>
            <person name="Ninomiya N."/>
            <person name="Nishio T."/>
            <person name="Okada M."/>
            <person name="Plessy C."/>
            <person name="Shibata K."/>
            <person name="Shiraki T."/>
            <person name="Suzuki S."/>
            <person name="Tagami M."/>
            <person name="Waki K."/>
            <person name="Watahiki A."/>
            <person name="Okamura-Oho Y."/>
            <person name="Suzuki H."/>
            <person name="Kawai J."/>
            <person name="Hayashizaki Y."/>
        </authorList>
    </citation>
    <scope>NUCLEOTIDE SEQUENCE [LARGE SCALE MRNA]</scope>
    <source>
        <strain>C57BL/6J</strain>
        <tissue>Brain</tissue>
    </source>
</reference>
<reference key="2">
    <citation type="journal article" date="2010" name="Cell">
        <title>A tissue-specific atlas of mouse protein phosphorylation and expression.</title>
        <authorList>
            <person name="Huttlin E.L."/>
            <person name="Jedrychowski M.P."/>
            <person name="Elias J.E."/>
            <person name="Goswami T."/>
            <person name="Rad R."/>
            <person name="Beausoleil S.A."/>
            <person name="Villen J."/>
            <person name="Haas W."/>
            <person name="Sowa M.E."/>
            <person name="Gygi S.P."/>
        </authorList>
    </citation>
    <scope>IDENTIFICATION BY MASS SPECTROMETRY [LARGE SCALE ANALYSIS]</scope>
    <source>
        <tissue>Brain</tissue>
    </source>
</reference>
<dbReference type="EMBL" id="AK132239">
    <property type="protein sequence ID" value="BAE21051.1"/>
    <property type="status" value="ALT_INIT"/>
    <property type="molecule type" value="mRNA"/>
</dbReference>
<dbReference type="CCDS" id="CCDS57678.1"/>
<dbReference type="RefSeq" id="NP_808437.2">
    <property type="nucleotide sequence ID" value="NM_177769.5"/>
</dbReference>
<dbReference type="SMR" id="Q3V1U8"/>
<dbReference type="BioGRID" id="234774">
    <property type="interactions" value="1"/>
</dbReference>
<dbReference type="FunCoup" id="Q3V1U8">
    <property type="interactions" value="453"/>
</dbReference>
<dbReference type="IntAct" id="Q3V1U8">
    <property type="interactions" value="1"/>
</dbReference>
<dbReference type="MINT" id="Q3V1U8"/>
<dbReference type="STRING" id="10090.ENSMUSP00000046191"/>
<dbReference type="iPTMnet" id="Q3V1U8"/>
<dbReference type="PhosphoSitePlus" id="Q3V1U8"/>
<dbReference type="PaxDb" id="10090-ENSMUSP00000046191"/>
<dbReference type="ProteomicsDB" id="277819"/>
<dbReference type="Antibodypedia" id="45528">
    <property type="antibodies" value="128 antibodies from 21 providers"/>
</dbReference>
<dbReference type="DNASU" id="270162"/>
<dbReference type="Ensembl" id="ENSMUST00000048409.14">
    <property type="protein sequence ID" value="ENSMUSP00000046191.8"/>
    <property type="gene ID" value="ENSMUSG00000041986.18"/>
</dbReference>
<dbReference type="GeneID" id="270162"/>
<dbReference type="KEGG" id="mmu:270162"/>
<dbReference type="UCSC" id="uc009pmq.1">
    <property type="organism name" value="mouse"/>
</dbReference>
<dbReference type="AGR" id="MGI:3583900"/>
<dbReference type="CTD" id="55531"/>
<dbReference type="MGI" id="MGI:3583900">
    <property type="gene designation" value="Elmod1"/>
</dbReference>
<dbReference type="VEuPathDB" id="HostDB:ENSMUSG00000041986"/>
<dbReference type="eggNOG" id="KOG2998">
    <property type="taxonomic scope" value="Eukaryota"/>
</dbReference>
<dbReference type="GeneTree" id="ENSGT00940000159782"/>
<dbReference type="HOGENOM" id="CLU_056289_0_0_1"/>
<dbReference type="InParanoid" id="Q3V1U8"/>
<dbReference type="OMA" id="PHFQQTF"/>
<dbReference type="PhylomeDB" id="Q3V1U8"/>
<dbReference type="TreeFam" id="TF323472"/>
<dbReference type="BioGRID-ORCS" id="270162">
    <property type="hits" value="0 hits in 76 CRISPR screens"/>
</dbReference>
<dbReference type="ChiTaRS" id="Elmod1">
    <property type="organism name" value="mouse"/>
</dbReference>
<dbReference type="PRO" id="PR:Q3V1U8"/>
<dbReference type="Proteomes" id="UP000000589">
    <property type="component" value="Chromosome 9"/>
</dbReference>
<dbReference type="RNAct" id="Q3V1U8">
    <property type="molecule type" value="protein"/>
</dbReference>
<dbReference type="Bgee" id="ENSMUSG00000041986">
    <property type="expression patterns" value="Expressed in dorsal striatum and 144 other cell types or tissues"/>
</dbReference>
<dbReference type="ExpressionAtlas" id="Q3V1U8">
    <property type="expression patterns" value="baseline and differential"/>
</dbReference>
<dbReference type="GO" id="GO:0005929">
    <property type="term" value="C:cilium"/>
    <property type="evidence" value="ECO:0000315"/>
    <property type="project" value="MGI"/>
</dbReference>
<dbReference type="GO" id="GO:0098978">
    <property type="term" value="C:glutamatergic synapse"/>
    <property type="evidence" value="ECO:0000314"/>
    <property type="project" value="SynGO"/>
</dbReference>
<dbReference type="GO" id="GO:0005794">
    <property type="term" value="C:Golgi apparatus"/>
    <property type="evidence" value="ECO:0000315"/>
    <property type="project" value="MGI"/>
</dbReference>
<dbReference type="GO" id="GO:0045202">
    <property type="term" value="C:synapse"/>
    <property type="evidence" value="ECO:0000314"/>
    <property type="project" value="SynGO"/>
</dbReference>
<dbReference type="GO" id="GO:0005096">
    <property type="term" value="F:GTPase activator activity"/>
    <property type="evidence" value="ECO:0000250"/>
    <property type="project" value="UniProtKB"/>
</dbReference>
<dbReference type="GO" id="GO:0060271">
    <property type="term" value="P:cilium assembly"/>
    <property type="evidence" value="ECO:0000315"/>
    <property type="project" value="MGI"/>
</dbReference>
<dbReference type="GO" id="GO:0008104">
    <property type="term" value="P:protein localization"/>
    <property type="evidence" value="ECO:0000315"/>
    <property type="project" value="MGI"/>
</dbReference>
<dbReference type="GO" id="GO:0015031">
    <property type="term" value="P:protein transport"/>
    <property type="evidence" value="ECO:0000315"/>
    <property type="project" value="MGI"/>
</dbReference>
<dbReference type="InterPro" id="IPR006816">
    <property type="entry name" value="ELMO_dom"/>
</dbReference>
<dbReference type="InterPro" id="IPR050868">
    <property type="entry name" value="ELMO_domain-containing"/>
</dbReference>
<dbReference type="PANTHER" id="PTHR12771:SF18">
    <property type="entry name" value="ELMO DOMAIN-CONTAINING PROTEIN 1"/>
    <property type="match status" value="1"/>
</dbReference>
<dbReference type="PANTHER" id="PTHR12771">
    <property type="entry name" value="ENGULFMENT AND CELL MOTILITY"/>
    <property type="match status" value="1"/>
</dbReference>
<dbReference type="Pfam" id="PF04727">
    <property type="entry name" value="ELMO_CED12"/>
    <property type="match status" value="1"/>
</dbReference>
<dbReference type="PROSITE" id="PS51335">
    <property type="entry name" value="ELMO"/>
    <property type="match status" value="1"/>
</dbReference>
<proteinExistence type="evidence at protein level"/>
<name>ELMD1_MOUSE</name>
<protein>
    <recommendedName>
        <fullName>ELMO domain-containing protein 1</fullName>
    </recommendedName>
</protein>
<keyword id="KW-0343">GTPase activation</keyword>
<keyword id="KW-1185">Reference proteome</keyword>
<evidence type="ECO:0000250" key="1"/>
<evidence type="ECO:0000255" key="2">
    <source>
        <dbReference type="PROSITE-ProRule" id="PRU00664"/>
    </source>
</evidence>
<evidence type="ECO:0000305" key="3"/>
<organism>
    <name type="scientific">Mus musculus</name>
    <name type="common">Mouse</name>
    <dbReference type="NCBI Taxonomy" id="10090"/>
    <lineage>
        <taxon>Eukaryota</taxon>
        <taxon>Metazoa</taxon>
        <taxon>Chordata</taxon>
        <taxon>Craniata</taxon>
        <taxon>Vertebrata</taxon>
        <taxon>Euteleostomi</taxon>
        <taxon>Mammalia</taxon>
        <taxon>Eutheria</taxon>
        <taxon>Euarchontoglires</taxon>
        <taxon>Glires</taxon>
        <taxon>Rodentia</taxon>
        <taxon>Myomorpha</taxon>
        <taxon>Muroidea</taxon>
        <taxon>Muridae</taxon>
        <taxon>Murinae</taxon>
        <taxon>Mus</taxon>
        <taxon>Mus</taxon>
    </lineage>
</organism>
<accession>Q3V1U8</accession>